<feature type="chain" id="PRO_0000082822" description="Peptide deformylase 1">
    <location>
        <begin position="1"/>
        <end position="168"/>
    </location>
</feature>
<feature type="active site" evidence="1">
    <location>
        <position position="135"/>
    </location>
</feature>
<feature type="binding site" evidence="1">
    <location>
        <position position="92"/>
    </location>
    <ligand>
        <name>Fe cation</name>
        <dbReference type="ChEBI" id="CHEBI:24875"/>
    </ligand>
</feature>
<feature type="binding site" evidence="1">
    <location>
        <position position="134"/>
    </location>
    <ligand>
        <name>Fe cation</name>
        <dbReference type="ChEBI" id="CHEBI:24875"/>
    </ligand>
</feature>
<feature type="binding site" evidence="1">
    <location>
        <position position="138"/>
    </location>
    <ligand>
        <name>Fe cation</name>
        <dbReference type="ChEBI" id="CHEBI:24875"/>
    </ligand>
</feature>
<comment type="function">
    <text evidence="1">Removes the formyl group from the N-terminal Met of newly synthesized proteins. Requires at least a dipeptide for an efficient rate of reaction. N-terminal L-methionine is a prerequisite for activity but the enzyme has broad specificity at other positions.</text>
</comment>
<comment type="catalytic activity">
    <reaction evidence="1">
        <text>N-terminal N-formyl-L-methionyl-[peptide] + H2O = N-terminal L-methionyl-[peptide] + formate</text>
        <dbReference type="Rhea" id="RHEA:24420"/>
        <dbReference type="Rhea" id="RHEA-COMP:10639"/>
        <dbReference type="Rhea" id="RHEA-COMP:10640"/>
        <dbReference type="ChEBI" id="CHEBI:15377"/>
        <dbReference type="ChEBI" id="CHEBI:15740"/>
        <dbReference type="ChEBI" id="CHEBI:49298"/>
        <dbReference type="ChEBI" id="CHEBI:64731"/>
        <dbReference type="EC" id="3.5.1.88"/>
    </reaction>
</comment>
<comment type="cofactor">
    <cofactor evidence="1">
        <name>Fe(2+)</name>
        <dbReference type="ChEBI" id="CHEBI:29033"/>
    </cofactor>
    <text evidence="1">Binds 1 Fe(2+) ion.</text>
</comment>
<comment type="similarity">
    <text evidence="1">Belongs to the polypeptide deformylase family.</text>
</comment>
<sequence length="168" mass="19185">MAILNILEFPDSRLRTLAKPVAMVDDGIRQLVDDMFETMYEAPGIGLAATQVNVHKRVVVMDLSEDRSAPMVFINPEIEKLTDEMDQYQEGCLSVPGFYENVDRPQKVRVKALDRDGKPYELVAEGLLAICIQHECDHLNGKLFVDYLSNLKRDRIKKKLEKQHKLNA</sequence>
<reference key="1">
    <citation type="journal article" date="2003" name="Proc. Natl. Acad. Sci. U.S.A.">
        <title>The complete genome sequence of the Arabidopsis and tomato pathogen Pseudomonas syringae pv. tomato DC3000.</title>
        <authorList>
            <person name="Buell C.R."/>
            <person name="Joardar V."/>
            <person name="Lindeberg M."/>
            <person name="Selengut J."/>
            <person name="Paulsen I.T."/>
            <person name="Gwinn M.L."/>
            <person name="Dodson R.J."/>
            <person name="DeBoy R.T."/>
            <person name="Durkin A.S."/>
            <person name="Kolonay J.F."/>
            <person name="Madupu R."/>
            <person name="Daugherty S.C."/>
            <person name="Brinkac L.M."/>
            <person name="Beanan M.J."/>
            <person name="Haft D.H."/>
            <person name="Nelson W.C."/>
            <person name="Davidsen T.M."/>
            <person name="Zafar N."/>
            <person name="Zhou L."/>
            <person name="Liu J."/>
            <person name="Yuan Q."/>
            <person name="Khouri H.M."/>
            <person name="Fedorova N.B."/>
            <person name="Tran B."/>
            <person name="Russell D."/>
            <person name="Berry K.J."/>
            <person name="Utterback T.R."/>
            <person name="Van Aken S.E."/>
            <person name="Feldblyum T.V."/>
            <person name="D'Ascenzo M."/>
            <person name="Deng W.-L."/>
            <person name="Ramos A.R."/>
            <person name="Alfano J.R."/>
            <person name="Cartinhour S."/>
            <person name="Chatterjee A.K."/>
            <person name="Delaney T.P."/>
            <person name="Lazarowitz S.G."/>
            <person name="Martin G.B."/>
            <person name="Schneider D.J."/>
            <person name="Tang X."/>
            <person name="Bender C.L."/>
            <person name="White O."/>
            <person name="Fraser C.M."/>
            <person name="Collmer A."/>
        </authorList>
    </citation>
    <scope>NUCLEOTIDE SEQUENCE [LARGE SCALE GENOMIC DNA]</scope>
    <source>
        <strain>ATCC BAA-871 / DC3000</strain>
    </source>
</reference>
<protein>
    <recommendedName>
        <fullName evidence="1">Peptide deformylase 1</fullName>
        <shortName evidence="1">PDF 1</shortName>
        <ecNumber evidence="1">3.5.1.88</ecNumber>
    </recommendedName>
    <alternativeName>
        <fullName evidence="1">Polypeptide deformylase 1</fullName>
    </alternativeName>
</protein>
<keyword id="KW-0378">Hydrolase</keyword>
<keyword id="KW-0408">Iron</keyword>
<keyword id="KW-0479">Metal-binding</keyword>
<keyword id="KW-0648">Protein biosynthesis</keyword>
<keyword id="KW-1185">Reference proteome</keyword>
<organism>
    <name type="scientific">Pseudomonas syringae pv. tomato (strain ATCC BAA-871 / DC3000)</name>
    <dbReference type="NCBI Taxonomy" id="223283"/>
    <lineage>
        <taxon>Bacteria</taxon>
        <taxon>Pseudomonadati</taxon>
        <taxon>Pseudomonadota</taxon>
        <taxon>Gammaproteobacteria</taxon>
        <taxon>Pseudomonadales</taxon>
        <taxon>Pseudomonadaceae</taxon>
        <taxon>Pseudomonas</taxon>
    </lineage>
</organism>
<proteinExistence type="inferred from homology"/>
<name>DEF1_PSESM</name>
<dbReference type="EC" id="3.5.1.88" evidence="1"/>
<dbReference type="EMBL" id="AE016853">
    <property type="protein sequence ID" value="AAO53731.1"/>
    <property type="molecule type" value="Genomic_DNA"/>
</dbReference>
<dbReference type="RefSeq" id="NP_790036.1">
    <property type="nucleotide sequence ID" value="NC_004578.1"/>
</dbReference>
<dbReference type="SMR" id="Q88B43"/>
<dbReference type="STRING" id="223283.PSPTO_0177"/>
<dbReference type="GeneID" id="1181785"/>
<dbReference type="KEGG" id="pst:PSPTO_0177"/>
<dbReference type="PATRIC" id="fig|223283.9.peg.183"/>
<dbReference type="eggNOG" id="COG0242">
    <property type="taxonomic scope" value="Bacteria"/>
</dbReference>
<dbReference type="HOGENOM" id="CLU_061901_2_1_6"/>
<dbReference type="OrthoDB" id="9804313at2"/>
<dbReference type="PhylomeDB" id="Q88B43"/>
<dbReference type="Proteomes" id="UP000002515">
    <property type="component" value="Chromosome"/>
</dbReference>
<dbReference type="GO" id="GO:0046872">
    <property type="term" value="F:metal ion binding"/>
    <property type="evidence" value="ECO:0007669"/>
    <property type="project" value="UniProtKB-KW"/>
</dbReference>
<dbReference type="GO" id="GO:0042586">
    <property type="term" value="F:peptide deformylase activity"/>
    <property type="evidence" value="ECO:0007669"/>
    <property type="project" value="UniProtKB-UniRule"/>
</dbReference>
<dbReference type="GO" id="GO:0043686">
    <property type="term" value="P:co-translational protein modification"/>
    <property type="evidence" value="ECO:0007669"/>
    <property type="project" value="TreeGrafter"/>
</dbReference>
<dbReference type="GO" id="GO:0006412">
    <property type="term" value="P:translation"/>
    <property type="evidence" value="ECO:0007669"/>
    <property type="project" value="UniProtKB-UniRule"/>
</dbReference>
<dbReference type="CDD" id="cd00487">
    <property type="entry name" value="Pep_deformylase"/>
    <property type="match status" value="1"/>
</dbReference>
<dbReference type="FunFam" id="3.90.45.10:FF:000001">
    <property type="entry name" value="Peptide deformylase"/>
    <property type="match status" value="1"/>
</dbReference>
<dbReference type="Gene3D" id="3.90.45.10">
    <property type="entry name" value="Peptide deformylase"/>
    <property type="match status" value="1"/>
</dbReference>
<dbReference type="HAMAP" id="MF_00163">
    <property type="entry name" value="Pep_deformylase"/>
    <property type="match status" value="1"/>
</dbReference>
<dbReference type="InterPro" id="IPR023635">
    <property type="entry name" value="Peptide_deformylase"/>
</dbReference>
<dbReference type="InterPro" id="IPR036821">
    <property type="entry name" value="Peptide_deformylase_sf"/>
</dbReference>
<dbReference type="NCBIfam" id="TIGR00079">
    <property type="entry name" value="pept_deformyl"/>
    <property type="match status" value="1"/>
</dbReference>
<dbReference type="NCBIfam" id="NF001159">
    <property type="entry name" value="PRK00150.1-3"/>
    <property type="match status" value="1"/>
</dbReference>
<dbReference type="PANTHER" id="PTHR10458">
    <property type="entry name" value="PEPTIDE DEFORMYLASE"/>
    <property type="match status" value="1"/>
</dbReference>
<dbReference type="PANTHER" id="PTHR10458:SF21">
    <property type="entry name" value="PEPTIDE DEFORMYLASE"/>
    <property type="match status" value="1"/>
</dbReference>
<dbReference type="Pfam" id="PF01327">
    <property type="entry name" value="Pep_deformylase"/>
    <property type="match status" value="1"/>
</dbReference>
<dbReference type="PIRSF" id="PIRSF004749">
    <property type="entry name" value="Pep_def"/>
    <property type="match status" value="1"/>
</dbReference>
<dbReference type="PRINTS" id="PR01576">
    <property type="entry name" value="PDEFORMYLASE"/>
</dbReference>
<dbReference type="SUPFAM" id="SSF56420">
    <property type="entry name" value="Peptide deformylase"/>
    <property type="match status" value="1"/>
</dbReference>
<gene>
    <name evidence="1" type="primary">def1</name>
    <name type="ordered locus">PSPTO_0177</name>
</gene>
<evidence type="ECO:0000255" key="1">
    <source>
        <dbReference type="HAMAP-Rule" id="MF_00163"/>
    </source>
</evidence>
<accession>Q88B43</accession>